<gene>
    <name evidence="1" type="primary">adk</name>
    <name type="ordered locus">SynWH7803_0415</name>
</gene>
<organism>
    <name type="scientific">Synechococcus sp. (strain WH7803)</name>
    <dbReference type="NCBI Taxonomy" id="32051"/>
    <lineage>
        <taxon>Bacteria</taxon>
        <taxon>Bacillati</taxon>
        <taxon>Cyanobacteriota</taxon>
        <taxon>Cyanophyceae</taxon>
        <taxon>Synechococcales</taxon>
        <taxon>Synechococcaceae</taxon>
        <taxon>Synechococcus</taxon>
    </lineage>
</organism>
<keyword id="KW-0067">ATP-binding</keyword>
<keyword id="KW-0963">Cytoplasm</keyword>
<keyword id="KW-0418">Kinase</keyword>
<keyword id="KW-0545">Nucleotide biosynthesis</keyword>
<keyword id="KW-0547">Nucleotide-binding</keyword>
<keyword id="KW-1185">Reference proteome</keyword>
<keyword id="KW-0808">Transferase</keyword>
<name>KAD_SYNPW</name>
<reference key="1">
    <citation type="submission" date="2006-05" db="EMBL/GenBank/DDBJ databases">
        <authorList>
            <consortium name="Genoscope"/>
        </authorList>
    </citation>
    <scope>NUCLEOTIDE SEQUENCE [LARGE SCALE GENOMIC DNA]</scope>
    <source>
        <strain>WH7803</strain>
    </source>
</reference>
<protein>
    <recommendedName>
        <fullName evidence="1">Adenylate kinase</fullName>
        <shortName evidence="1">AK</shortName>
        <ecNumber evidence="1">2.7.4.3</ecNumber>
    </recommendedName>
    <alternativeName>
        <fullName evidence="1">ATP-AMP transphosphorylase</fullName>
    </alternativeName>
    <alternativeName>
        <fullName evidence="1">ATP:AMP phosphotransferase</fullName>
    </alternativeName>
    <alternativeName>
        <fullName evidence="1">Adenylate monophosphate kinase</fullName>
    </alternativeName>
</protein>
<comment type="function">
    <text evidence="1">Catalyzes the reversible transfer of the terminal phosphate group between ATP and AMP. Plays an important role in cellular energy homeostasis and in adenine nucleotide metabolism.</text>
</comment>
<comment type="catalytic activity">
    <reaction evidence="1">
        <text>AMP + ATP = 2 ADP</text>
        <dbReference type="Rhea" id="RHEA:12973"/>
        <dbReference type="ChEBI" id="CHEBI:30616"/>
        <dbReference type="ChEBI" id="CHEBI:456215"/>
        <dbReference type="ChEBI" id="CHEBI:456216"/>
        <dbReference type="EC" id="2.7.4.3"/>
    </reaction>
</comment>
<comment type="pathway">
    <text evidence="1">Purine metabolism; AMP biosynthesis via salvage pathway; AMP from ADP: step 1/1.</text>
</comment>
<comment type="subunit">
    <text evidence="1">Monomer.</text>
</comment>
<comment type="subcellular location">
    <subcellularLocation>
        <location evidence="1">Cytoplasm</location>
    </subcellularLocation>
</comment>
<comment type="domain">
    <text evidence="1">Consists of three domains, a large central CORE domain and two small peripheral domains, NMPbind and LID, which undergo movements during catalysis. The LID domain closes over the site of phosphoryl transfer upon ATP binding. Assembling and dissambling the active center during each catalytic cycle provides an effective means to prevent ATP hydrolysis.</text>
</comment>
<comment type="similarity">
    <text evidence="1">Belongs to the adenylate kinase family.</text>
</comment>
<feature type="chain" id="PRO_1000058924" description="Adenylate kinase">
    <location>
        <begin position="1"/>
        <end position="183"/>
    </location>
</feature>
<feature type="region of interest" description="NMP" evidence="1">
    <location>
        <begin position="32"/>
        <end position="61"/>
    </location>
</feature>
<feature type="region of interest" description="LID" evidence="1">
    <location>
        <begin position="127"/>
        <end position="133"/>
    </location>
</feature>
<feature type="binding site" evidence="1">
    <location>
        <begin position="12"/>
        <end position="17"/>
    </location>
    <ligand>
        <name>ATP</name>
        <dbReference type="ChEBI" id="CHEBI:30616"/>
    </ligand>
</feature>
<feature type="binding site" evidence="1">
    <location>
        <position position="33"/>
    </location>
    <ligand>
        <name>AMP</name>
        <dbReference type="ChEBI" id="CHEBI:456215"/>
    </ligand>
</feature>
<feature type="binding site" evidence="1">
    <location>
        <position position="38"/>
    </location>
    <ligand>
        <name>AMP</name>
        <dbReference type="ChEBI" id="CHEBI:456215"/>
    </ligand>
</feature>
<feature type="binding site" evidence="1">
    <location>
        <begin position="59"/>
        <end position="61"/>
    </location>
    <ligand>
        <name>AMP</name>
        <dbReference type="ChEBI" id="CHEBI:456215"/>
    </ligand>
</feature>
<feature type="binding site" evidence="1">
    <location>
        <begin position="86"/>
        <end position="89"/>
    </location>
    <ligand>
        <name>AMP</name>
        <dbReference type="ChEBI" id="CHEBI:456215"/>
    </ligand>
</feature>
<feature type="binding site" evidence="1">
    <location>
        <position position="93"/>
    </location>
    <ligand>
        <name>AMP</name>
        <dbReference type="ChEBI" id="CHEBI:456215"/>
    </ligand>
</feature>
<feature type="binding site" evidence="1">
    <location>
        <position position="128"/>
    </location>
    <ligand>
        <name>ATP</name>
        <dbReference type="ChEBI" id="CHEBI:30616"/>
    </ligand>
</feature>
<feature type="binding site" evidence="1">
    <location>
        <position position="130"/>
    </location>
    <ligand>
        <name>AMP</name>
        <dbReference type="ChEBI" id="CHEBI:456215"/>
    </ligand>
</feature>
<feature type="binding site" evidence="1">
    <location>
        <position position="141"/>
    </location>
    <ligand>
        <name>AMP</name>
        <dbReference type="ChEBI" id="CHEBI:456215"/>
    </ligand>
</feature>
<feature type="binding site" evidence="1">
    <location>
        <position position="169"/>
    </location>
    <ligand>
        <name>ATP</name>
        <dbReference type="ChEBI" id="CHEBI:30616"/>
    </ligand>
</feature>
<evidence type="ECO:0000255" key="1">
    <source>
        <dbReference type="HAMAP-Rule" id="MF_00235"/>
    </source>
</evidence>
<dbReference type="EC" id="2.7.4.3" evidence="1"/>
<dbReference type="EMBL" id="CT971583">
    <property type="protein sequence ID" value="CAK22841.1"/>
    <property type="molecule type" value="Genomic_DNA"/>
</dbReference>
<dbReference type="SMR" id="A5GIS6"/>
<dbReference type="STRING" id="32051.SynWH7803_0415"/>
<dbReference type="KEGG" id="syx:SynWH7803_0415"/>
<dbReference type="eggNOG" id="COG0563">
    <property type="taxonomic scope" value="Bacteria"/>
</dbReference>
<dbReference type="HOGENOM" id="CLU_032354_4_1_3"/>
<dbReference type="OrthoDB" id="9805030at2"/>
<dbReference type="UniPathway" id="UPA00588">
    <property type="reaction ID" value="UER00649"/>
</dbReference>
<dbReference type="Proteomes" id="UP000001566">
    <property type="component" value="Chromosome"/>
</dbReference>
<dbReference type="GO" id="GO:0005737">
    <property type="term" value="C:cytoplasm"/>
    <property type="evidence" value="ECO:0007669"/>
    <property type="project" value="UniProtKB-SubCell"/>
</dbReference>
<dbReference type="GO" id="GO:0004017">
    <property type="term" value="F:adenylate kinase activity"/>
    <property type="evidence" value="ECO:0007669"/>
    <property type="project" value="UniProtKB-UniRule"/>
</dbReference>
<dbReference type="GO" id="GO:0005524">
    <property type="term" value="F:ATP binding"/>
    <property type="evidence" value="ECO:0007669"/>
    <property type="project" value="UniProtKB-UniRule"/>
</dbReference>
<dbReference type="GO" id="GO:0044209">
    <property type="term" value="P:AMP salvage"/>
    <property type="evidence" value="ECO:0007669"/>
    <property type="project" value="UniProtKB-UniRule"/>
</dbReference>
<dbReference type="CDD" id="cd01428">
    <property type="entry name" value="ADK"/>
    <property type="match status" value="1"/>
</dbReference>
<dbReference type="Gene3D" id="3.40.50.300">
    <property type="entry name" value="P-loop containing nucleotide triphosphate hydrolases"/>
    <property type="match status" value="1"/>
</dbReference>
<dbReference type="HAMAP" id="MF_00235">
    <property type="entry name" value="Adenylate_kinase_Adk"/>
    <property type="match status" value="1"/>
</dbReference>
<dbReference type="InterPro" id="IPR000850">
    <property type="entry name" value="Adenylat/UMP-CMP_kin"/>
</dbReference>
<dbReference type="InterPro" id="IPR033690">
    <property type="entry name" value="Adenylat_kinase_CS"/>
</dbReference>
<dbReference type="InterPro" id="IPR027417">
    <property type="entry name" value="P-loop_NTPase"/>
</dbReference>
<dbReference type="NCBIfam" id="NF001381">
    <property type="entry name" value="PRK00279.1-3"/>
    <property type="match status" value="1"/>
</dbReference>
<dbReference type="NCBIfam" id="NF011100">
    <property type="entry name" value="PRK14527.1"/>
    <property type="match status" value="1"/>
</dbReference>
<dbReference type="NCBIfam" id="NF011104">
    <property type="entry name" value="PRK14531.1"/>
    <property type="match status" value="1"/>
</dbReference>
<dbReference type="NCBIfam" id="NF011105">
    <property type="entry name" value="PRK14532.1"/>
    <property type="match status" value="1"/>
</dbReference>
<dbReference type="PANTHER" id="PTHR23359">
    <property type="entry name" value="NUCLEOTIDE KINASE"/>
    <property type="match status" value="1"/>
</dbReference>
<dbReference type="Pfam" id="PF00406">
    <property type="entry name" value="ADK"/>
    <property type="match status" value="1"/>
</dbReference>
<dbReference type="PRINTS" id="PR00094">
    <property type="entry name" value="ADENYLTKNASE"/>
</dbReference>
<dbReference type="SUPFAM" id="SSF52540">
    <property type="entry name" value="P-loop containing nucleoside triphosphate hydrolases"/>
    <property type="match status" value="1"/>
</dbReference>
<dbReference type="PROSITE" id="PS00113">
    <property type="entry name" value="ADENYLATE_KINASE"/>
    <property type="match status" value="1"/>
</dbReference>
<proteinExistence type="inferred from homology"/>
<sequence length="183" mass="19843">MKQRLLFIGPPGAGKGTQASRLCETHGLRHLSTGDLLRSEVSAGSALGQEAEAVMNRGELVSDDLVLAIVRSQLTALNGQGWLLDGFPRNVAQAEALEPLLGELQQSIETVVLLELDDEVLVERLLARGRADDNESVIRNRLEVYRQQTAPLIDYYQARGLLISVDAQGSVEAITTRLEASLA</sequence>
<accession>A5GIS6</accession>